<proteinExistence type="inferred from homology"/>
<protein>
    <recommendedName>
        <fullName evidence="1">Ribose-5-phosphate isomerase A</fullName>
        <ecNumber evidence="1">5.3.1.6</ecNumber>
    </recommendedName>
    <alternativeName>
        <fullName evidence="1">Phosphoriboisomerase A</fullName>
        <shortName evidence="1">PRI</shortName>
    </alternativeName>
</protein>
<evidence type="ECO:0000255" key="1">
    <source>
        <dbReference type="HAMAP-Rule" id="MF_00170"/>
    </source>
</evidence>
<sequence length="215" mass="22919">MSEAKRLAAEKAIDYVEDGMIVGVGTGSTVAYFIDALGRIGHRIKGAVSSSEQSTARLRQHGIEVLDLNHTGTLSLYVDGADECDPNRCLIKGGGAALTREKIIAEASERFICIVDPSKQVPVLGNFPLPVEVIPMARSLVARQILALTGGQPVWRDGVVTDNGNVVLDVHNLHITDPVALERNLNQIPGVVCVGLFARRPADVVIVGGETPRVL</sequence>
<name>RPIA_XANCP</name>
<organism>
    <name type="scientific">Xanthomonas campestris pv. campestris (strain ATCC 33913 / DSM 3586 / NCPPB 528 / LMG 568 / P 25)</name>
    <dbReference type="NCBI Taxonomy" id="190485"/>
    <lineage>
        <taxon>Bacteria</taxon>
        <taxon>Pseudomonadati</taxon>
        <taxon>Pseudomonadota</taxon>
        <taxon>Gammaproteobacteria</taxon>
        <taxon>Lysobacterales</taxon>
        <taxon>Lysobacteraceae</taxon>
        <taxon>Xanthomonas</taxon>
    </lineage>
</organism>
<comment type="function">
    <text evidence="1">Catalyzes the reversible conversion of ribose-5-phosphate to ribulose 5-phosphate.</text>
</comment>
<comment type="catalytic activity">
    <reaction evidence="1">
        <text>aldehydo-D-ribose 5-phosphate = D-ribulose 5-phosphate</text>
        <dbReference type="Rhea" id="RHEA:14657"/>
        <dbReference type="ChEBI" id="CHEBI:58121"/>
        <dbReference type="ChEBI" id="CHEBI:58273"/>
        <dbReference type="EC" id="5.3.1.6"/>
    </reaction>
</comment>
<comment type="pathway">
    <text evidence="1">Carbohydrate degradation; pentose phosphate pathway; D-ribose 5-phosphate from D-ribulose 5-phosphate (non-oxidative stage): step 1/1.</text>
</comment>
<comment type="subunit">
    <text evidence="1">Homodimer.</text>
</comment>
<comment type="similarity">
    <text evidence="1">Belongs to the ribose 5-phosphate isomerase family.</text>
</comment>
<keyword id="KW-0413">Isomerase</keyword>
<keyword id="KW-1185">Reference proteome</keyword>
<reference key="1">
    <citation type="journal article" date="2002" name="Nature">
        <title>Comparison of the genomes of two Xanthomonas pathogens with differing host specificities.</title>
        <authorList>
            <person name="da Silva A.C.R."/>
            <person name="Ferro J.A."/>
            <person name="Reinach F.C."/>
            <person name="Farah C.S."/>
            <person name="Furlan L.R."/>
            <person name="Quaggio R.B."/>
            <person name="Monteiro-Vitorello C.B."/>
            <person name="Van Sluys M.A."/>
            <person name="Almeida N.F. Jr."/>
            <person name="Alves L.M.C."/>
            <person name="do Amaral A.M."/>
            <person name="Bertolini M.C."/>
            <person name="Camargo L.E.A."/>
            <person name="Camarotte G."/>
            <person name="Cannavan F."/>
            <person name="Cardozo J."/>
            <person name="Chambergo F."/>
            <person name="Ciapina L.P."/>
            <person name="Cicarelli R.M.B."/>
            <person name="Coutinho L.L."/>
            <person name="Cursino-Santos J.R."/>
            <person name="El-Dorry H."/>
            <person name="Faria J.B."/>
            <person name="Ferreira A.J.S."/>
            <person name="Ferreira R.C.C."/>
            <person name="Ferro M.I.T."/>
            <person name="Formighieri E.F."/>
            <person name="Franco M.C."/>
            <person name="Greggio C.C."/>
            <person name="Gruber A."/>
            <person name="Katsuyama A.M."/>
            <person name="Kishi L.T."/>
            <person name="Leite R.P."/>
            <person name="Lemos E.G.M."/>
            <person name="Lemos M.V.F."/>
            <person name="Locali E.C."/>
            <person name="Machado M.A."/>
            <person name="Madeira A.M.B.N."/>
            <person name="Martinez-Rossi N.M."/>
            <person name="Martins E.C."/>
            <person name="Meidanis J."/>
            <person name="Menck C.F.M."/>
            <person name="Miyaki C.Y."/>
            <person name="Moon D.H."/>
            <person name="Moreira L.M."/>
            <person name="Novo M.T.M."/>
            <person name="Okura V.K."/>
            <person name="Oliveira M.C."/>
            <person name="Oliveira V.R."/>
            <person name="Pereira H.A."/>
            <person name="Rossi A."/>
            <person name="Sena J.A.D."/>
            <person name="Silva C."/>
            <person name="de Souza R.F."/>
            <person name="Spinola L.A.F."/>
            <person name="Takita M.A."/>
            <person name="Tamura R.E."/>
            <person name="Teixeira E.C."/>
            <person name="Tezza R.I.D."/>
            <person name="Trindade dos Santos M."/>
            <person name="Truffi D."/>
            <person name="Tsai S.M."/>
            <person name="White F.F."/>
            <person name="Setubal J.C."/>
            <person name="Kitajima J.P."/>
        </authorList>
    </citation>
    <scope>NUCLEOTIDE SEQUENCE [LARGE SCALE GENOMIC DNA]</scope>
    <source>
        <strain>ATCC 33913 / DSM 3586 / NCPPB 528 / LMG 568 / P 25</strain>
    </source>
</reference>
<feature type="chain" id="PRO_0000158497" description="Ribose-5-phosphate isomerase A">
    <location>
        <begin position="1"/>
        <end position="215"/>
    </location>
</feature>
<feature type="active site" description="Proton acceptor" evidence="1">
    <location>
        <position position="101"/>
    </location>
</feature>
<feature type="binding site" evidence="1">
    <location>
        <begin position="26"/>
        <end position="29"/>
    </location>
    <ligand>
        <name>substrate</name>
    </ligand>
</feature>
<feature type="binding site" evidence="1">
    <location>
        <begin position="79"/>
        <end position="82"/>
    </location>
    <ligand>
        <name>substrate</name>
    </ligand>
</feature>
<feature type="binding site" evidence="1">
    <location>
        <begin position="92"/>
        <end position="95"/>
    </location>
    <ligand>
        <name>substrate</name>
    </ligand>
</feature>
<feature type="binding site" evidence="1">
    <location>
        <position position="119"/>
    </location>
    <ligand>
        <name>substrate</name>
    </ligand>
</feature>
<accession>Q8P5S1</accession>
<dbReference type="EC" id="5.3.1.6" evidence="1"/>
<dbReference type="EMBL" id="AE008922">
    <property type="protein sequence ID" value="AAM42535.1"/>
    <property type="molecule type" value="Genomic_DNA"/>
</dbReference>
<dbReference type="RefSeq" id="NP_638611.1">
    <property type="nucleotide sequence ID" value="NC_003902.1"/>
</dbReference>
<dbReference type="RefSeq" id="WP_011038367.1">
    <property type="nucleotide sequence ID" value="NC_003902.1"/>
</dbReference>
<dbReference type="SMR" id="Q8P5S1"/>
<dbReference type="STRING" id="190485.XCC3265"/>
<dbReference type="EnsemblBacteria" id="AAM42535">
    <property type="protein sequence ID" value="AAM42535"/>
    <property type="gene ID" value="XCC3265"/>
</dbReference>
<dbReference type="KEGG" id="xcc:XCC3265"/>
<dbReference type="PATRIC" id="fig|190485.4.peg.3488"/>
<dbReference type="eggNOG" id="COG0120">
    <property type="taxonomic scope" value="Bacteria"/>
</dbReference>
<dbReference type="HOGENOM" id="CLU_056590_1_1_6"/>
<dbReference type="OrthoDB" id="5870696at2"/>
<dbReference type="UniPathway" id="UPA00115">
    <property type="reaction ID" value="UER00412"/>
</dbReference>
<dbReference type="Proteomes" id="UP000001010">
    <property type="component" value="Chromosome"/>
</dbReference>
<dbReference type="GO" id="GO:0005829">
    <property type="term" value="C:cytosol"/>
    <property type="evidence" value="ECO:0000318"/>
    <property type="project" value="GO_Central"/>
</dbReference>
<dbReference type="GO" id="GO:0004751">
    <property type="term" value="F:ribose-5-phosphate isomerase activity"/>
    <property type="evidence" value="ECO:0000318"/>
    <property type="project" value="GO_Central"/>
</dbReference>
<dbReference type="GO" id="GO:0006014">
    <property type="term" value="P:D-ribose metabolic process"/>
    <property type="evidence" value="ECO:0000318"/>
    <property type="project" value="GO_Central"/>
</dbReference>
<dbReference type="GO" id="GO:0009052">
    <property type="term" value="P:pentose-phosphate shunt, non-oxidative branch"/>
    <property type="evidence" value="ECO:0000318"/>
    <property type="project" value="GO_Central"/>
</dbReference>
<dbReference type="CDD" id="cd01398">
    <property type="entry name" value="RPI_A"/>
    <property type="match status" value="1"/>
</dbReference>
<dbReference type="FunFam" id="3.30.70.260:FF:000004">
    <property type="entry name" value="Ribose-5-phosphate isomerase A"/>
    <property type="match status" value="1"/>
</dbReference>
<dbReference type="FunFam" id="3.40.50.1360:FF:000001">
    <property type="entry name" value="Ribose-5-phosphate isomerase A"/>
    <property type="match status" value="1"/>
</dbReference>
<dbReference type="Gene3D" id="3.30.70.260">
    <property type="match status" value="1"/>
</dbReference>
<dbReference type="Gene3D" id="3.40.50.1360">
    <property type="match status" value="1"/>
</dbReference>
<dbReference type="HAMAP" id="MF_00170">
    <property type="entry name" value="Rib_5P_isom_A"/>
    <property type="match status" value="1"/>
</dbReference>
<dbReference type="InterPro" id="IPR037171">
    <property type="entry name" value="NagB/RpiA_transferase-like"/>
</dbReference>
<dbReference type="InterPro" id="IPR020672">
    <property type="entry name" value="Ribose5P_isomerase_typA_subgr"/>
</dbReference>
<dbReference type="InterPro" id="IPR004788">
    <property type="entry name" value="Ribose5P_isomerase_type_A"/>
</dbReference>
<dbReference type="NCBIfam" id="NF001924">
    <property type="entry name" value="PRK00702.1"/>
    <property type="match status" value="1"/>
</dbReference>
<dbReference type="NCBIfam" id="TIGR00021">
    <property type="entry name" value="rpiA"/>
    <property type="match status" value="1"/>
</dbReference>
<dbReference type="PANTHER" id="PTHR11934">
    <property type="entry name" value="RIBOSE-5-PHOSPHATE ISOMERASE"/>
    <property type="match status" value="1"/>
</dbReference>
<dbReference type="PANTHER" id="PTHR11934:SF0">
    <property type="entry name" value="RIBOSE-5-PHOSPHATE ISOMERASE"/>
    <property type="match status" value="1"/>
</dbReference>
<dbReference type="Pfam" id="PF06026">
    <property type="entry name" value="Rib_5-P_isom_A"/>
    <property type="match status" value="1"/>
</dbReference>
<dbReference type="SUPFAM" id="SSF75445">
    <property type="entry name" value="D-ribose-5-phosphate isomerase (RpiA), lid domain"/>
    <property type="match status" value="1"/>
</dbReference>
<dbReference type="SUPFAM" id="SSF100950">
    <property type="entry name" value="NagB/RpiA/CoA transferase-like"/>
    <property type="match status" value="1"/>
</dbReference>
<gene>
    <name evidence="1" type="primary">rpiA</name>
    <name type="ordered locus">XCC3265</name>
</gene>